<keyword id="KW-0028">Amino-acid biosynthesis</keyword>
<keyword id="KW-0055">Arginine biosynthesis</keyword>
<keyword id="KW-0963">Cytoplasm</keyword>
<keyword id="KW-0456">Lyase</keyword>
<name>ARLY_PROM3</name>
<protein>
    <recommendedName>
        <fullName evidence="1">Argininosuccinate lyase</fullName>
        <shortName evidence="1">ASAL</shortName>
        <ecNumber evidence="1">4.3.2.1</ecNumber>
    </recommendedName>
    <alternativeName>
        <fullName evidence="1">Arginosuccinase</fullName>
    </alternativeName>
</protein>
<evidence type="ECO:0000255" key="1">
    <source>
        <dbReference type="HAMAP-Rule" id="MF_00006"/>
    </source>
</evidence>
<proteinExistence type="inferred from homology"/>
<accession>A2C5K9</accession>
<gene>
    <name evidence="1" type="primary">argH</name>
    <name type="ordered locus">P9303_00121</name>
</gene>
<reference key="1">
    <citation type="journal article" date="2007" name="PLoS Genet.">
        <title>Patterns and implications of gene gain and loss in the evolution of Prochlorococcus.</title>
        <authorList>
            <person name="Kettler G.C."/>
            <person name="Martiny A.C."/>
            <person name="Huang K."/>
            <person name="Zucker J."/>
            <person name="Coleman M.L."/>
            <person name="Rodrigue S."/>
            <person name="Chen F."/>
            <person name="Lapidus A."/>
            <person name="Ferriera S."/>
            <person name="Johnson J."/>
            <person name="Steglich C."/>
            <person name="Church G.M."/>
            <person name="Richardson P."/>
            <person name="Chisholm S.W."/>
        </authorList>
    </citation>
    <scope>NUCLEOTIDE SEQUENCE [LARGE SCALE GENOMIC DNA]</scope>
    <source>
        <strain>MIT 9303</strain>
    </source>
</reference>
<sequence>MAGGVTGGSAEGWSKRFEEGLHPVIERFNASISFDITLLQEDLDGSIAHARMLGECGVISLEEAAQLEGGLEKIRSEAAAGEFQPGLVDEDVHFAVERRLIALLGPVGKKLHTGRSRNDQVGTDLRLWLRRRLDDLDCELERFQNALLTQAESHRQTLIPGYTHLQRAQPLCLAHHLLAYIEMIQRDRDRLKDVRGRVNISPLGAAALAGTSVPIDRQNTAAALGFECIYANSLDAVSDRDFAVEYTAAASLVMVHLSRLAEEVIFWASEEFAFVRLSDRCATGSSLMPQKKNPDVPELVRGKCGRVFGHLQGLLTMIKGLPLAYNKDFQEDKEALFDTVRTTKDCVEAMSILMEQGLEFCSERLAAAVESDFSNATDVADYLVAKGVPFREAYQLVGAVVKRCLDEGILLCDLSLEQWQEFHSAIAEDLHEALAPKRVVAVRISEGGTGFDRVEEQLRHWRSRLDSGVS</sequence>
<dbReference type="EC" id="4.3.2.1" evidence="1"/>
<dbReference type="EMBL" id="CP000554">
    <property type="protein sequence ID" value="ABM76769.1"/>
    <property type="molecule type" value="Genomic_DNA"/>
</dbReference>
<dbReference type="RefSeq" id="WP_011824703.1">
    <property type="nucleotide sequence ID" value="NC_008820.1"/>
</dbReference>
<dbReference type="SMR" id="A2C5K9"/>
<dbReference type="STRING" id="59922.P9303_00121"/>
<dbReference type="KEGG" id="pmf:P9303_00121"/>
<dbReference type="HOGENOM" id="CLU_027272_2_3_3"/>
<dbReference type="BioCyc" id="PMAR59922:G1G80-13-MONOMER"/>
<dbReference type="UniPathway" id="UPA00068">
    <property type="reaction ID" value="UER00114"/>
</dbReference>
<dbReference type="Proteomes" id="UP000002274">
    <property type="component" value="Chromosome"/>
</dbReference>
<dbReference type="GO" id="GO:0005829">
    <property type="term" value="C:cytosol"/>
    <property type="evidence" value="ECO:0007669"/>
    <property type="project" value="TreeGrafter"/>
</dbReference>
<dbReference type="GO" id="GO:0004056">
    <property type="term" value="F:argininosuccinate lyase activity"/>
    <property type="evidence" value="ECO:0007669"/>
    <property type="project" value="UniProtKB-UniRule"/>
</dbReference>
<dbReference type="GO" id="GO:0042450">
    <property type="term" value="P:arginine biosynthetic process via ornithine"/>
    <property type="evidence" value="ECO:0007669"/>
    <property type="project" value="InterPro"/>
</dbReference>
<dbReference type="GO" id="GO:0006526">
    <property type="term" value="P:L-arginine biosynthetic process"/>
    <property type="evidence" value="ECO:0007669"/>
    <property type="project" value="UniProtKB-UniRule"/>
</dbReference>
<dbReference type="CDD" id="cd01359">
    <property type="entry name" value="Argininosuccinate_lyase"/>
    <property type="match status" value="1"/>
</dbReference>
<dbReference type="FunFam" id="1.10.275.10:FF:000002">
    <property type="entry name" value="Argininosuccinate lyase"/>
    <property type="match status" value="1"/>
</dbReference>
<dbReference type="FunFam" id="1.10.40.30:FF:000001">
    <property type="entry name" value="Argininosuccinate lyase"/>
    <property type="match status" value="1"/>
</dbReference>
<dbReference type="FunFam" id="1.20.200.10:FF:000015">
    <property type="entry name" value="argininosuccinate lyase isoform X2"/>
    <property type="match status" value="1"/>
</dbReference>
<dbReference type="Gene3D" id="1.10.40.30">
    <property type="entry name" value="Fumarase/aspartase (C-terminal domain)"/>
    <property type="match status" value="1"/>
</dbReference>
<dbReference type="Gene3D" id="1.20.200.10">
    <property type="entry name" value="Fumarase/aspartase (Central domain)"/>
    <property type="match status" value="1"/>
</dbReference>
<dbReference type="Gene3D" id="1.10.275.10">
    <property type="entry name" value="Fumarase/aspartase (N-terminal domain)"/>
    <property type="match status" value="1"/>
</dbReference>
<dbReference type="HAMAP" id="MF_00006">
    <property type="entry name" value="Arg_succ_lyase"/>
    <property type="match status" value="1"/>
</dbReference>
<dbReference type="InterPro" id="IPR029419">
    <property type="entry name" value="Arg_succ_lyase_C"/>
</dbReference>
<dbReference type="InterPro" id="IPR009049">
    <property type="entry name" value="Argininosuccinate_lyase"/>
</dbReference>
<dbReference type="InterPro" id="IPR024083">
    <property type="entry name" value="Fumarase/histidase_N"/>
</dbReference>
<dbReference type="InterPro" id="IPR020557">
    <property type="entry name" value="Fumarate_lyase_CS"/>
</dbReference>
<dbReference type="InterPro" id="IPR000362">
    <property type="entry name" value="Fumarate_lyase_fam"/>
</dbReference>
<dbReference type="InterPro" id="IPR022761">
    <property type="entry name" value="Fumarate_lyase_N"/>
</dbReference>
<dbReference type="InterPro" id="IPR008948">
    <property type="entry name" value="L-Aspartase-like"/>
</dbReference>
<dbReference type="NCBIfam" id="TIGR00838">
    <property type="entry name" value="argH"/>
    <property type="match status" value="1"/>
</dbReference>
<dbReference type="PANTHER" id="PTHR43814">
    <property type="entry name" value="ARGININOSUCCINATE LYASE"/>
    <property type="match status" value="1"/>
</dbReference>
<dbReference type="PANTHER" id="PTHR43814:SF1">
    <property type="entry name" value="ARGININOSUCCINATE LYASE"/>
    <property type="match status" value="1"/>
</dbReference>
<dbReference type="Pfam" id="PF14698">
    <property type="entry name" value="ASL_C2"/>
    <property type="match status" value="1"/>
</dbReference>
<dbReference type="Pfam" id="PF00206">
    <property type="entry name" value="Lyase_1"/>
    <property type="match status" value="1"/>
</dbReference>
<dbReference type="PRINTS" id="PR00145">
    <property type="entry name" value="ARGSUCLYASE"/>
</dbReference>
<dbReference type="PRINTS" id="PR00149">
    <property type="entry name" value="FUMRATELYASE"/>
</dbReference>
<dbReference type="SUPFAM" id="SSF48557">
    <property type="entry name" value="L-aspartase-like"/>
    <property type="match status" value="1"/>
</dbReference>
<dbReference type="PROSITE" id="PS00163">
    <property type="entry name" value="FUMARATE_LYASES"/>
    <property type="match status" value="1"/>
</dbReference>
<comment type="catalytic activity">
    <reaction evidence="1">
        <text>2-(N(omega)-L-arginino)succinate = fumarate + L-arginine</text>
        <dbReference type="Rhea" id="RHEA:24020"/>
        <dbReference type="ChEBI" id="CHEBI:29806"/>
        <dbReference type="ChEBI" id="CHEBI:32682"/>
        <dbReference type="ChEBI" id="CHEBI:57472"/>
        <dbReference type="EC" id="4.3.2.1"/>
    </reaction>
</comment>
<comment type="pathway">
    <text evidence="1">Amino-acid biosynthesis; L-arginine biosynthesis; L-arginine from L-ornithine and carbamoyl phosphate: step 3/3.</text>
</comment>
<comment type="subcellular location">
    <subcellularLocation>
        <location evidence="1">Cytoplasm</location>
    </subcellularLocation>
</comment>
<comment type="similarity">
    <text evidence="1">Belongs to the lyase 1 family. Argininosuccinate lyase subfamily.</text>
</comment>
<feature type="chain" id="PRO_1000000520" description="Argininosuccinate lyase">
    <location>
        <begin position="1"/>
        <end position="470"/>
    </location>
</feature>
<organism>
    <name type="scientific">Prochlorococcus marinus (strain MIT 9303)</name>
    <dbReference type="NCBI Taxonomy" id="59922"/>
    <lineage>
        <taxon>Bacteria</taxon>
        <taxon>Bacillati</taxon>
        <taxon>Cyanobacteriota</taxon>
        <taxon>Cyanophyceae</taxon>
        <taxon>Synechococcales</taxon>
        <taxon>Prochlorococcaceae</taxon>
        <taxon>Prochlorococcus</taxon>
    </lineage>
</organism>